<keyword id="KW-0687">Ribonucleoprotein</keyword>
<keyword id="KW-0689">Ribosomal protein</keyword>
<keyword id="KW-0694">RNA-binding</keyword>
<keyword id="KW-0699">rRNA-binding</keyword>
<name>RS11_METM7</name>
<reference key="1">
    <citation type="submission" date="2007-06" db="EMBL/GenBank/DDBJ databases">
        <title>Complete sequence of Methanococcus maripaludis C7.</title>
        <authorList>
            <consortium name="US DOE Joint Genome Institute"/>
            <person name="Copeland A."/>
            <person name="Lucas S."/>
            <person name="Lapidus A."/>
            <person name="Barry K."/>
            <person name="Glavina del Rio T."/>
            <person name="Dalin E."/>
            <person name="Tice H."/>
            <person name="Pitluck S."/>
            <person name="Clum A."/>
            <person name="Schmutz J."/>
            <person name="Larimer F."/>
            <person name="Land M."/>
            <person name="Hauser L."/>
            <person name="Kyrpides N."/>
            <person name="Anderson I."/>
            <person name="Sieprawska-Lupa M."/>
            <person name="Whitman W.B."/>
            <person name="Richardson P."/>
        </authorList>
    </citation>
    <scope>NUCLEOTIDE SEQUENCE [LARGE SCALE GENOMIC DNA]</scope>
    <source>
        <strain>C7 / ATCC BAA-1331</strain>
    </source>
</reference>
<accession>A6VGQ8</accession>
<evidence type="ECO:0000255" key="1">
    <source>
        <dbReference type="HAMAP-Rule" id="MF_01310"/>
    </source>
</evidence>
<evidence type="ECO:0000256" key="2">
    <source>
        <dbReference type="SAM" id="MobiDB-lite"/>
    </source>
</evidence>
<evidence type="ECO:0000305" key="3"/>
<sequence length="124" mass="13418">MSQKWGLVHIYASYNNTILHVTDLTGAETIAKVSGGMIVRNQRDESSPYAAMQAAFKIADLMRDKGIDQVHVKVRATGGQKSKNPGPGAQAAIRALSRAGIRIGRIEDATPIPHDGTTPKRKNR</sequence>
<feature type="chain" id="PRO_0000323353" description="Small ribosomal subunit protein uS11">
    <location>
        <begin position="1"/>
        <end position="124"/>
    </location>
</feature>
<feature type="region of interest" description="Disordered" evidence="2">
    <location>
        <begin position="102"/>
        <end position="124"/>
    </location>
</feature>
<comment type="function">
    <text evidence="1">Located on the platform of the 30S subunit.</text>
</comment>
<comment type="subunit">
    <text evidence="1">Part of the 30S ribosomal subunit.</text>
</comment>
<comment type="similarity">
    <text evidence="1">Belongs to the universal ribosomal protein uS11 family.</text>
</comment>
<proteinExistence type="inferred from homology"/>
<protein>
    <recommendedName>
        <fullName evidence="1">Small ribosomal subunit protein uS11</fullName>
    </recommendedName>
    <alternativeName>
        <fullName evidence="3">30S ribosomal protein S11</fullName>
    </alternativeName>
</protein>
<organism>
    <name type="scientific">Methanococcus maripaludis (strain C7 / ATCC BAA-1331)</name>
    <dbReference type="NCBI Taxonomy" id="426368"/>
    <lineage>
        <taxon>Archaea</taxon>
        <taxon>Methanobacteriati</taxon>
        <taxon>Methanobacteriota</taxon>
        <taxon>Methanomada group</taxon>
        <taxon>Methanococci</taxon>
        <taxon>Methanococcales</taxon>
        <taxon>Methanococcaceae</taxon>
        <taxon>Methanococcus</taxon>
    </lineage>
</organism>
<dbReference type="EMBL" id="CP000745">
    <property type="protein sequence ID" value="ABR65634.1"/>
    <property type="molecule type" value="Genomic_DNA"/>
</dbReference>
<dbReference type="SMR" id="A6VGQ8"/>
<dbReference type="STRING" id="426368.MmarC7_0566"/>
<dbReference type="KEGG" id="mmz:MmarC7_0566"/>
<dbReference type="eggNOG" id="arCOG04240">
    <property type="taxonomic scope" value="Archaea"/>
</dbReference>
<dbReference type="HOGENOM" id="CLU_072439_6_1_2"/>
<dbReference type="OrthoDB" id="12054at2157"/>
<dbReference type="GO" id="GO:1990904">
    <property type="term" value="C:ribonucleoprotein complex"/>
    <property type="evidence" value="ECO:0007669"/>
    <property type="project" value="UniProtKB-KW"/>
</dbReference>
<dbReference type="GO" id="GO:0005840">
    <property type="term" value="C:ribosome"/>
    <property type="evidence" value="ECO:0007669"/>
    <property type="project" value="UniProtKB-KW"/>
</dbReference>
<dbReference type="GO" id="GO:0019843">
    <property type="term" value="F:rRNA binding"/>
    <property type="evidence" value="ECO:0007669"/>
    <property type="project" value="UniProtKB-UniRule"/>
</dbReference>
<dbReference type="GO" id="GO:0003735">
    <property type="term" value="F:structural constituent of ribosome"/>
    <property type="evidence" value="ECO:0007669"/>
    <property type="project" value="InterPro"/>
</dbReference>
<dbReference type="GO" id="GO:0006412">
    <property type="term" value="P:translation"/>
    <property type="evidence" value="ECO:0007669"/>
    <property type="project" value="UniProtKB-UniRule"/>
</dbReference>
<dbReference type="FunFam" id="3.30.420.80:FF:000007">
    <property type="entry name" value="30S ribosomal protein S11"/>
    <property type="match status" value="1"/>
</dbReference>
<dbReference type="Gene3D" id="3.30.420.80">
    <property type="entry name" value="Ribosomal protein S11"/>
    <property type="match status" value="1"/>
</dbReference>
<dbReference type="HAMAP" id="MF_01310">
    <property type="entry name" value="Ribosomal_uS11"/>
    <property type="match status" value="1"/>
</dbReference>
<dbReference type="InterPro" id="IPR001971">
    <property type="entry name" value="Ribosomal_uS11"/>
</dbReference>
<dbReference type="InterPro" id="IPR019961">
    <property type="entry name" value="Ribosomal_uS11_archaeal"/>
</dbReference>
<dbReference type="InterPro" id="IPR018102">
    <property type="entry name" value="Ribosomal_uS11_CS"/>
</dbReference>
<dbReference type="InterPro" id="IPR036967">
    <property type="entry name" value="Ribosomal_uS11_sf"/>
</dbReference>
<dbReference type="NCBIfam" id="TIGR03628">
    <property type="entry name" value="arch_S11P"/>
    <property type="match status" value="1"/>
</dbReference>
<dbReference type="NCBIfam" id="NF007176">
    <property type="entry name" value="PRK09607.1"/>
    <property type="match status" value="1"/>
</dbReference>
<dbReference type="PANTHER" id="PTHR11759">
    <property type="entry name" value="40S RIBOSOMAL PROTEIN S14/30S RIBOSOMAL PROTEIN S11"/>
    <property type="match status" value="1"/>
</dbReference>
<dbReference type="Pfam" id="PF00411">
    <property type="entry name" value="Ribosomal_S11"/>
    <property type="match status" value="1"/>
</dbReference>
<dbReference type="PIRSF" id="PIRSF002131">
    <property type="entry name" value="Ribosomal_S11"/>
    <property type="match status" value="1"/>
</dbReference>
<dbReference type="SUPFAM" id="SSF53137">
    <property type="entry name" value="Translational machinery components"/>
    <property type="match status" value="1"/>
</dbReference>
<dbReference type="PROSITE" id="PS00054">
    <property type="entry name" value="RIBOSOMAL_S11"/>
    <property type="match status" value="1"/>
</dbReference>
<gene>
    <name evidence="1" type="primary">rps11</name>
    <name type="ordered locus">MmarC7_0566</name>
</gene>